<dbReference type="EC" id="4.2.1.9" evidence="1"/>
<dbReference type="EMBL" id="AP009178">
    <property type="protein sequence ID" value="BAF69241.1"/>
    <property type="molecule type" value="Genomic_DNA"/>
</dbReference>
<dbReference type="RefSeq" id="WP_011979667.1">
    <property type="nucleotide sequence ID" value="NC_009662.1"/>
</dbReference>
<dbReference type="SMR" id="A6Q182"/>
<dbReference type="FunCoup" id="A6Q182">
    <property type="interactions" value="419"/>
</dbReference>
<dbReference type="STRING" id="387092.NIS_0126"/>
<dbReference type="KEGG" id="nis:NIS_0126"/>
<dbReference type="eggNOG" id="COG0129">
    <property type="taxonomic scope" value="Bacteria"/>
</dbReference>
<dbReference type="HOGENOM" id="CLU_014271_4_2_7"/>
<dbReference type="InParanoid" id="A6Q182"/>
<dbReference type="OrthoDB" id="9807077at2"/>
<dbReference type="UniPathway" id="UPA00047">
    <property type="reaction ID" value="UER00057"/>
</dbReference>
<dbReference type="UniPathway" id="UPA00049">
    <property type="reaction ID" value="UER00061"/>
</dbReference>
<dbReference type="Proteomes" id="UP000001118">
    <property type="component" value="Chromosome"/>
</dbReference>
<dbReference type="GO" id="GO:0005829">
    <property type="term" value="C:cytosol"/>
    <property type="evidence" value="ECO:0007669"/>
    <property type="project" value="TreeGrafter"/>
</dbReference>
<dbReference type="GO" id="GO:0051537">
    <property type="term" value="F:2 iron, 2 sulfur cluster binding"/>
    <property type="evidence" value="ECO:0007669"/>
    <property type="project" value="UniProtKB-UniRule"/>
</dbReference>
<dbReference type="GO" id="GO:0004160">
    <property type="term" value="F:dihydroxy-acid dehydratase activity"/>
    <property type="evidence" value="ECO:0007669"/>
    <property type="project" value="UniProtKB-UniRule"/>
</dbReference>
<dbReference type="GO" id="GO:0000287">
    <property type="term" value="F:magnesium ion binding"/>
    <property type="evidence" value="ECO:0007669"/>
    <property type="project" value="UniProtKB-UniRule"/>
</dbReference>
<dbReference type="GO" id="GO:0009097">
    <property type="term" value="P:isoleucine biosynthetic process"/>
    <property type="evidence" value="ECO:0007669"/>
    <property type="project" value="UniProtKB-UniRule"/>
</dbReference>
<dbReference type="GO" id="GO:0009099">
    <property type="term" value="P:L-valine biosynthetic process"/>
    <property type="evidence" value="ECO:0007669"/>
    <property type="project" value="UniProtKB-UniRule"/>
</dbReference>
<dbReference type="FunFam" id="3.50.30.80:FF:000001">
    <property type="entry name" value="Dihydroxy-acid dehydratase"/>
    <property type="match status" value="1"/>
</dbReference>
<dbReference type="Gene3D" id="3.50.30.80">
    <property type="entry name" value="IlvD/EDD C-terminal domain-like"/>
    <property type="match status" value="1"/>
</dbReference>
<dbReference type="HAMAP" id="MF_00012">
    <property type="entry name" value="IlvD"/>
    <property type="match status" value="1"/>
</dbReference>
<dbReference type="InterPro" id="IPR042096">
    <property type="entry name" value="Dihydro-acid_dehy_C"/>
</dbReference>
<dbReference type="InterPro" id="IPR004404">
    <property type="entry name" value="DihydroxyA_deHydtase"/>
</dbReference>
<dbReference type="InterPro" id="IPR020558">
    <property type="entry name" value="DiOHA_6PGluconate_deHydtase_CS"/>
</dbReference>
<dbReference type="InterPro" id="IPR056740">
    <property type="entry name" value="ILV_EDD_C"/>
</dbReference>
<dbReference type="InterPro" id="IPR000581">
    <property type="entry name" value="ILV_EDD_N"/>
</dbReference>
<dbReference type="InterPro" id="IPR037237">
    <property type="entry name" value="IlvD/EDD_N"/>
</dbReference>
<dbReference type="NCBIfam" id="TIGR00110">
    <property type="entry name" value="ilvD"/>
    <property type="match status" value="1"/>
</dbReference>
<dbReference type="NCBIfam" id="NF002068">
    <property type="entry name" value="PRK00911.1"/>
    <property type="match status" value="1"/>
</dbReference>
<dbReference type="PANTHER" id="PTHR43661">
    <property type="entry name" value="D-XYLONATE DEHYDRATASE"/>
    <property type="match status" value="1"/>
</dbReference>
<dbReference type="PANTHER" id="PTHR43661:SF3">
    <property type="entry name" value="D-XYLONATE DEHYDRATASE YAGF-RELATED"/>
    <property type="match status" value="1"/>
</dbReference>
<dbReference type="Pfam" id="PF24877">
    <property type="entry name" value="ILV_EDD_C"/>
    <property type="match status" value="1"/>
</dbReference>
<dbReference type="Pfam" id="PF00920">
    <property type="entry name" value="ILVD_EDD_N"/>
    <property type="match status" value="1"/>
</dbReference>
<dbReference type="SUPFAM" id="SSF143975">
    <property type="entry name" value="IlvD/EDD N-terminal domain-like"/>
    <property type="match status" value="1"/>
</dbReference>
<dbReference type="SUPFAM" id="SSF52016">
    <property type="entry name" value="LeuD/IlvD-like"/>
    <property type="match status" value="1"/>
</dbReference>
<dbReference type="PROSITE" id="PS00886">
    <property type="entry name" value="ILVD_EDD_1"/>
    <property type="match status" value="1"/>
</dbReference>
<dbReference type="PROSITE" id="PS00887">
    <property type="entry name" value="ILVD_EDD_2"/>
    <property type="match status" value="1"/>
</dbReference>
<accession>A6Q182</accession>
<name>ILVD_NITSB</name>
<evidence type="ECO:0000255" key="1">
    <source>
        <dbReference type="HAMAP-Rule" id="MF_00012"/>
    </source>
</evidence>
<feature type="chain" id="PRO_1000001020" description="Dihydroxy-acid dehydratase">
    <location>
        <begin position="1"/>
        <end position="564"/>
    </location>
</feature>
<feature type="active site" description="Proton acceptor" evidence="1">
    <location>
        <position position="477"/>
    </location>
</feature>
<feature type="binding site" evidence="1">
    <location>
        <position position="78"/>
    </location>
    <ligand>
        <name>Mg(2+)</name>
        <dbReference type="ChEBI" id="CHEBI:18420"/>
    </ligand>
</feature>
<feature type="binding site" evidence="1">
    <location>
        <position position="119"/>
    </location>
    <ligand>
        <name>[2Fe-2S] cluster</name>
        <dbReference type="ChEBI" id="CHEBI:190135"/>
    </ligand>
</feature>
<feature type="binding site" evidence="1">
    <location>
        <position position="120"/>
    </location>
    <ligand>
        <name>Mg(2+)</name>
        <dbReference type="ChEBI" id="CHEBI:18420"/>
    </ligand>
</feature>
<feature type="binding site" description="via carbamate group" evidence="1">
    <location>
        <position position="121"/>
    </location>
    <ligand>
        <name>Mg(2+)</name>
        <dbReference type="ChEBI" id="CHEBI:18420"/>
    </ligand>
</feature>
<feature type="binding site" evidence="1">
    <location>
        <position position="192"/>
    </location>
    <ligand>
        <name>[2Fe-2S] cluster</name>
        <dbReference type="ChEBI" id="CHEBI:190135"/>
    </ligand>
</feature>
<feature type="binding site" evidence="1">
    <location>
        <position position="451"/>
    </location>
    <ligand>
        <name>Mg(2+)</name>
        <dbReference type="ChEBI" id="CHEBI:18420"/>
    </ligand>
</feature>
<feature type="modified residue" description="N6-carboxylysine" evidence="1">
    <location>
        <position position="121"/>
    </location>
</feature>
<keyword id="KW-0001">2Fe-2S</keyword>
<keyword id="KW-0028">Amino-acid biosynthesis</keyword>
<keyword id="KW-0100">Branched-chain amino acid biosynthesis</keyword>
<keyword id="KW-0408">Iron</keyword>
<keyword id="KW-0411">Iron-sulfur</keyword>
<keyword id="KW-0456">Lyase</keyword>
<keyword id="KW-0460">Magnesium</keyword>
<keyword id="KW-0479">Metal-binding</keyword>
<keyword id="KW-1185">Reference proteome</keyword>
<gene>
    <name evidence="1" type="primary">ilvD</name>
    <name type="ordered locus">NIS_0126</name>
</gene>
<protein>
    <recommendedName>
        <fullName evidence="1">Dihydroxy-acid dehydratase</fullName>
        <shortName evidence="1">DAD</shortName>
        <ecNumber evidence="1">4.2.1.9</ecNumber>
    </recommendedName>
</protein>
<sequence>MRSDEIKKGFQRAPHRSLLRATGLKDEDFEKPFIGVANSFIEIIPGHFFLNKYAAIIKDEIRKCGCVPFEFNTIGVDDGIAMGHDGMLYSLPSREIIANSIETVMNAHKLDALICIPNCDKITPGMIMGALRVNVPTIFVSGGPMKAGKLSDGTPIDLATAFEAVGKVAKGEMSEEELYQIECEACPSGGSCSGMFTANSMNTLMEAMGIALKGNGTILALTPEREELLRKAARRICEIAKDEKLTQEYKIRNILNEKAIHNAFVVDMAMGGSTNTVLHMMAISKEAGVDFPLSKLNEISKHVAHIAKISPSLQTVHMEDINKAGGVSAVMKEASKRSDTVLYLDNPVIEGGTIGDRIKDAEVIDTSIIHPIDKPYSEVGGLAILFGNLAEEGAVVKTAGIDPNMREFTGKAICFDSQQEAIDGILGGKVKPGHVVVIRYEGPKGGPGMQEMLAPTSLIAGMNLGDKVALITDGRFSGATRGASIGHVSPEAAEGGVIGLLQDGDEIYINVDTYTLEVKLSDEELEERRKNFKPKVKDIKGRWLRQYRSLVTNAANGAVLKDEC</sequence>
<proteinExistence type="inferred from homology"/>
<comment type="function">
    <text evidence="1">Functions in the biosynthesis of branched-chain amino acids. Catalyzes the dehydration of (2R,3R)-2,3-dihydroxy-3-methylpentanoate (2,3-dihydroxy-3-methylvalerate) into 2-oxo-3-methylpentanoate (2-oxo-3-methylvalerate) and of (2R)-2,3-dihydroxy-3-methylbutanoate (2,3-dihydroxyisovalerate) into 2-oxo-3-methylbutanoate (2-oxoisovalerate), the penultimate precursor to L-isoleucine and L-valine, respectively.</text>
</comment>
<comment type="catalytic activity">
    <reaction evidence="1">
        <text>(2R)-2,3-dihydroxy-3-methylbutanoate = 3-methyl-2-oxobutanoate + H2O</text>
        <dbReference type="Rhea" id="RHEA:24809"/>
        <dbReference type="ChEBI" id="CHEBI:11851"/>
        <dbReference type="ChEBI" id="CHEBI:15377"/>
        <dbReference type="ChEBI" id="CHEBI:49072"/>
        <dbReference type="EC" id="4.2.1.9"/>
    </reaction>
    <physiologicalReaction direction="left-to-right" evidence="1">
        <dbReference type="Rhea" id="RHEA:24810"/>
    </physiologicalReaction>
</comment>
<comment type="catalytic activity">
    <reaction evidence="1">
        <text>(2R,3R)-2,3-dihydroxy-3-methylpentanoate = (S)-3-methyl-2-oxopentanoate + H2O</text>
        <dbReference type="Rhea" id="RHEA:27694"/>
        <dbReference type="ChEBI" id="CHEBI:15377"/>
        <dbReference type="ChEBI" id="CHEBI:35146"/>
        <dbReference type="ChEBI" id="CHEBI:49258"/>
        <dbReference type="EC" id="4.2.1.9"/>
    </reaction>
    <physiologicalReaction direction="left-to-right" evidence="1">
        <dbReference type="Rhea" id="RHEA:27695"/>
    </physiologicalReaction>
</comment>
<comment type="cofactor">
    <cofactor evidence="1">
        <name>[2Fe-2S] cluster</name>
        <dbReference type="ChEBI" id="CHEBI:190135"/>
    </cofactor>
    <text evidence="1">Binds 1 [2Fe-2S] cluster per subunit. This cluster acts as a Lewis acid cofactor.</text>
</comment>
<comment type="cofactor">
    <cofactor evidence="1">
        <name>Mg(2+)</name>
        <dbReference type="ChEBI" id="CHEBI:18420"/>
    </cofactor>
</comment>
<comment type="pathway">
    <text evidence="1">Amino-acid biosynthesis; L-isoleucine biosynthesis; L-isoleucine from 2-oxobutanoate: step 3/4.</text>
</comment>
<comment type="pathway">
    <text evidence="1">Amino-acid biosynthesis; L-valine biosynthesis; L-valine from pyruvate: step 3/4.</text>
</comment>
<comment type="subunit">
    <text evidence="1">Homodimer.</text>
</comment>
<comment type="similarity">
    <text evidence="1">Belongs to the IlvD/Edd family.</text>
</comment>
<organism>
    <name type="scientific">Nitratiruptor sp. (strain SB155-2)</name>
    <dbReference type="NCBI Taxonomy" id="387092"/>
    <lineage>
        <taxon>Bacteria</taxon>
        <taxon>Pseudomonadati</taxon>
        <taxon>Campylobacterota</taxon>
        <taxon>Epsilonproteobacteria</taxon>
        <taxon>Nautiliales</taxon>
        <taxon>Nitratiruptoraceae</taxon>
        <taxon>Nitratiruptor</taxon>
    </lineage>
</organism>
<reference key="1">
    <citation type="journal article" date="2007" name="Proc. Natl. Acad. Sci. U.S.A.">
        <title>Deep-sea vent epsilon-proteobacterial genomes provide insights into emergence of pathogens.</title>
        <authorList>
            <person name="Nakagawa S."/>
            <person name="Takaki Y."/>
            <person name="Shimamura S."/>
            <person name="Reysenbach A.-L."/>
            <person name="Takai K."/>
            <person name="Horikoshi K."/>
        </authorList>
    </citation>
    <scope>NUCLEOTIDE SEQUENCE [LARGE SCALE GENOMIC DNA]</scope>
    <source>
        <strain>SB155-2</strain>
    </source>
</reference>